<dbReference type="EC" id="1.3.1.98" evidence="1"/>
<dbReference type="EMBL" id="CP000117">
    <property type="protein sequence ID" value="ABA21939.1"/>
    <property type="molecule type" value="Genomic_DNA"/>
</dbReference>
<dbReference type="SMR" id="Q3MAP7"/>
<dbReference type="STRING" id="240292.Ava_2321"/>
<dbReference type="KEGG" id="ava:Ava_2321"/>
<dbReference type="eggNOG" id="COG0812">
    <property type="taxonomic scope" value="Bacteria"/>
</dbReference>
<dbReference type="HOGENOM" id="CLU_035304_1_1_3"/>
<dbReference type="UniPathway" id="UPA00219"/>
<dbReference type="Proteomes" id="UP000002533">
    <property type="component" value="Chromosome"/>
</dbReference>
<dbReference type="GO" id="GO:0005829">
    <property type="term" value="C:cytosol"/>
    <property type="evidence" value="ECO:0007669"/>
    <property type="project" value="TreeGrafter"/>
</dbReference>
<dbReference type="GO" id="GO:0071949">
    <property type="term" value="F:FAD binding"/>
    <property type="evidence" value="ECO:0007669"/>
    <property type="project" value="InterPro"/>
</dbReference>
<dbReference type="GO" id="GO:0008762">
    <property type="term" value="F:UDP-N-acetylmuramate dehydrogenase activity"/>
    <property type="evidence" value="ECO:0007669"/>
    <property type="project" value="UniProtKB-UniRule"/>
</dbReference>
<dbReference type="GO" id="GO:0051301">
    <property type="term" value="P:cell division"/>
    <property type="evidence" value="ECO:0007669"/>
    <property type="project" value="UniProtKB-KW"/>
</dbReference>
<dbReference type="GO" id="GO:0071555">
    <property type="term" value="P:cell wall organization"/>
    <property type="evidence" value="ECO:0007669"/>
    <property type="project" value="UniProtKB-KW"/>
</dbReference>
<dbReference type="GO" id="GO:0009252">
    <property type="term" value="P:peptidoglycan biosynthetic process"/>
    <property type="evidence" value="ECO:0007669"/>
    <property type="project" value="UniProtKB-UniRule"/>
</dbReference>
<dbReference type="GO" id="GO:0008360">
    <property type="term" value="P:regulation of cell shape"/>
    <property type="evidence" value="ECO:0007669"/>
    <property type="project" value="UniProtKB-KW"/>
</dbReference>
<dbReference type="Gene3D" id="3.30.465.10">
    <property type="match status" value="1"/>
</dbReference>
<dbReference type="Gene3D" id="3.90.78.10">
    <property type="entry name" value="UDP-N-acetylenolpyruvoylglucosamine reductase, C-terminal domain"/>
    <property type="match status" value="1"/>
</dbReference>
<dbReference type="Gene3D" id="3.30.43.10">
    <property type="entry name" value="Uridine Diphospho-n-acetylenolpyruvylglucosamine Reductase, domain 2"/>
    <property type="match status" value="1"/>
</dbReference>
<dbReference type="HAMAP" id="MF_00037">
    <property type="entry name" value="MurB"/>
    <property type="match status" value="1"/>
</dbReference>
<dbReference type="InterPro" id="IPR016166">
    <property type="entry name" value="FAD-bd_PCMH"/>
</dbReference>
<dbReference type="InterPro" id="IPR036318">
    <property type="entry name" value="FAD-bd_PCMH-like_sf"/>
</dbReference>
<dbReference type="InterPro" id="IPR016167">
    <property type="entry name" value="FAD-bd_PCMH_sub1"/>
</dbReference>
<dbReference type="InterPro" id="IPR016169">
    <property type="entry name" value="FAD-bd_PCMH_sub2"/>
</dbReference>
<dbReference type="InterPro" id="IPR003170">
    <property type="entry name" value="MurB"/>
</dbReference>
<dbReference type="InterPro" id="IPR011601">
    <property type="entry name" value="MurB_C"/>
</dbReference>
<dbReference type="InterPro" id="IPR036635">
    <property type="entry name" value="MurB_C_sf"/>
</dbReference>
<dbReference type="InterPro" id="IPR006094">
    <property type="entry name" value="Oxid_FAD_bind_N"/>
</dbReference>
<dbReference type="NCBIfam" id="TIGR00179">
    <property type="entry name" value="murB"/>
    <property type="match status" value="1"/>
</dbReference>
<dbReference type="NCBIfam" id="NF010480">
    <property type="entry name" value="PRK13905.1"/>
    <property type="match status" value="1"/>
</dbReference>
<dbReference type="PANTHER" id="PTHR21071">
    <property type="entry name" value="UDP-N-ACETYLENOLPYRUVOYLGLUCOSAMINE REDUCTASE"/>
    <property type="match status" value="1"/>
</dbReference>
<dbReference type="PANTHER" id="PTHR21071:SF4">
    <property type="entry name" value="UDP-N-ACETYLENOLPYRUVOYLGLUCOSAMINE REDUCTASE"/>
    <property type="match status" value="1"/>
</dbReference>
<dbReference type="Pfam" id="PF01565">
    <property type="entry name" value="FAD_binding_4"/>
    <property type="match status" value="1"/>
</dbReference>
<dbReference type="Pfam" id="PF02873">
    <property type="entry name" value="MurB_C"/>
    <property type="match status" value="1"/>
</dbReference>
<dbReference type="SUPFAM" id="SSF56176">
    <property type="entry name" value="FAD-binding/transporter-associated domain-like"/>
    <property type="match status" value="1"/>
</dbReference>
<dbReference type="SUPFAM" id="SSF56194">
    <property type="entry name" value="Uridine diphospho-N-Acetylenolpyruvylglucosamine reductase, MurB, C-terminal domain"/>
    <property type="match status" value="1"/>
</dbReference>
<dbReference type="PROSITE" id="PS51387">
    <property type="entry name" value="FAD_PCMH"/>
    <property type="match status" value="1"/>
</dbReference>
<accession>Q3MAP7</accession>
<gene>
    <name evidence="1" type="primary">murB</name>
    <name type="ordered locus">Ava_2321</name>
</gene>
<feature type="chain" id="PRO_1000002861" description="UDP-N-acetylenolpyruvoylglucosamine reductase">
    <location>
        <begin position="1"/>
        <end position="331"/>
    </location>
</feature>
<feature type="domain" description="FAD-binding PCMH-type" evidence="1">
    <location>
        <begin position="54"/>
        <end position="221"/>
    </location>
</feature>
<feature type="active site" evidence="1">
    <location>
        <position position="200"/>
    </location>
</feature>
<feature type="active site" description="Proton donor" evidence="1">
    <location>
        <position position="251"/>
    </location>
</feature>
<feature type="active site" evidence="1">
    <location>
        <position position="321"/>
    </location>
</feature>
<comment type="function">
    <text evidence="1">Cell wall formation.</text>
</comment>
<comment type="catalytic activity">
    <reaction evidence="1">
        <text>UDP-N-acetyl-alpha-D-muramate + NADP(+) = UDP-N-acetyl-3-O-(1-carboxyvinyl)-alpha-D-glucosamine + NADPH + H(+)</text>
        <dbReference type="Rhea" id="RHEA:12248"/>
        <dbReference type="ChEBI" id="CHEBI:15378"/>
        <dbReference type="ChEBI" id="CHEBI:57783"/>
        <dbReference type="ChEBI" id="CHEBI:58349"/>
        <dbReference type="ChEBI" id="CHEBI:68483"/>
        <dbReference type="ChEBI" id="CHEBI:70757"/>
        <dbReference type="EC" id="1.3.1.98"/>
    </reaction>
</comment>
<comment type="cofactor">
    <cofactor evidence="1">
        <name>FAD</name>
        <dbReference type="ChEBI" id="CHEBI:57692"/>
    </cofactor>
</comment>
<comment type="pathway">
    <text evidence="1">Cell wall biogenesis; peptidoglycan biosynthesis.</text>
</comment>
<comment type="subcellular location">
    <subcellularLocation>
        <location evidence="1">Cytoplasm</location>
    </subcellularLocation>
</comment>
<comment type="similarity">
    <text evidence="1">Belongs to the MurB family.</text>
</comment>
<proteinExistence type="inferred from homology"/>
<keyword id="KW-0131">Cell cycle</keyword>
<keyword id="KW-0132">Cell division</keyword>
<keyword id="KW-0133">Cell shape</keyword>
<keyword id="KW-0961">Cell wall biogenesis/degradation</keyword>
<keyword id="KW-0963">Cytoplasm</keyword>
<keyword id="KW-0274">FAD</keyword>
<keyword id="KW-0285">Flavoprotein</keyword>
<keyword id="KW-0521">NADP</keyword>
<keyword id="KW-0560">Oxidoreductase</keyword>
<keyword id="KW-0573">Peptidoglycan synthesis</keyword>
<protein>
    <recommendedName>
        <fullName evidence="1">UDP-N-acetylenolpyruvoylglucosamine reductase</fullName>
        <ecNumber evidence="1">1.3.1.98</ecNumber>
    </recommendedName>
    <alternativeName>
        <fullName evidence="1">UDP-N-acetylmuramate dehydrogenase</fullName>
    </alternativeName>
</protein>
<evidence type="ECO:0000255" key="1">
    <source>
        <dbReference type="HAMAP-Rule" id="MF_00037"/>
    </source>
</evidence>
<organism>
    <name type="scientific">Trichormus variabilis (strain ATCC 29413 / PCC 7937)</name>
    <name type="common">Anabaena variabilis</name>
    <dbReference type="NCBI Taxonomy" id="240292"/>
    <lineage>
        <taxon>Bacteria</taxon>
        <taxon>Bacillati</taxon>
        <taxon>Cyanobacteriota</taxon>
        <taxon>Cyanophyceae</taxon>
        <taxon>Nostocales</taxon>
        <taxon>Nostocaceae</taxon>
        <taxon>Trichormus</taxon>
    </lineage>
</organism>
<name>MURB_TRIV2</name>
<sequence>MKISQAVGNACTVPASNVETHNNNPSRESKIIYLPGTNCEIKSQALLSAFTSYRVGGAAELYVAPRNIEALQASLKYAQEHNLRVTTLGAGSNLLVSDRGISGLVIATRHLRYNRFDHQTGQVTVAAGESIPSLAWEIAKLGWQGFEWAVGIPGTVGGAVVMNAGAHNSCIADILVSAQVLSPDGTIETLTPEELGYGYRTSLLQGSNRVVTQATFQLQPGFDPAYITATTREHKQMRLTTQPYNFPSCGSVFRNPKPYSAGWLIEQSGLKGYQIGGAQVAHLHANFIVNRGGAKANDIFCLIRHIQQEVQERWSILLEPEVKMLGEFQAA</sequence>
<reference key="1">
    <citation type="journal article" date="2014" name="Stand. Genomic Sci.">
        <title>Complete genome sequence of Anabaena variabilis ATCC 29413.</title>
        <authorList>
            <person name="Thiel T."/>
            <person name="Pratte B.S."/>
            <person name="Zhong J."/>
            <person name="Goodwin L."/>
            <person name="Copeland A."/>
            <person name="Lucas S."/>
            <person name="Han C."/>
            <person name="Pitluck S."/>
            <person name="Land M.L."/>
            <person name="Kyrpides N.C."/>
            <person name="Woyke T."/>
        </authorList>
    </citation>
    <scope>NUCLEOTIDE SEQUENCE [LARGE SCALE GENOMIC DNA]</scope>
    <source>
        <strain>ATCC 29413 / PCC 7937</strain>
    </source>
</reference>